<organism>
    <name type="scientific">Staphylococcus saprophyticus subsp. saprophyticus (strain ATCC 15305 / DSM 20229 / NCIMB 8711 / NCTC 7292 / S-41)</name>
    <dbReference type="NCBI Taxonomy" id="342451"/>
    <lineage>
        <taxon>Bacteria</taxon>
        <taxon>Bacillati</taxon>
        <taxon>Bacillota</taxon>
        <taxon>Bacilli</taxon>
        <taxon>Bacillales</taxon>
        <taxon>Staphylococcaceae</taxon>
        <taxon>Staphylococcus</taxon>
    </lineage>
</organism>
<proteinExistence type="inferred from homology"/>
<gene>
    <name evidence="1" type="primary">hemC</name>
    <name type="ordered locus">SSP1094</name>
</gene>
<sequence length="308" mass="33971">MRKLVVGSRRSKLALTQSRQFIDKLKAIDPSLEIEIKEIVTKGDLIVDKQLSKVGGKGLFVKEIQNELFNHGIDMAIHSLKDVPSVIPDGLTLGCIPDRENPYDAYIAKNHVPLNELPDNSIVGTSSLRRGAQILAKYPKLQIKWIRGNIDTRLNKLETEDYDAIILAAAGLKRMGWSDDIVTSYLDKETLIPAIGQGALGIECRSDDETLLSLLSKVHNQDVADCVTAERTFLTRMNGSCQVPIGGYATKEADGTIEFTGLIMSPDGKERYQHTVRGTDPVALGEEVTKVLNEQGAYEIIKALNEEQ</sequence>
<dbReference type="EC" id="2.5.1.61" evidence="1"/>
<dbReference type="EMBL" id="AP008934">
    <property type="protein sequence ID" value="BAE18239.1"/>
    <property type="molecule type" value="Genomic_DNA"/>
</dbReference>
<dbReference type="RefSeq" id="WP_011302930.1">
    <property type="nucleotide sequence ID" value="NZ_MTGA01000038.1"/>
</dbReference>
<dbReference type="SMR" id="Q49YA2"/>
<dbReference type="GeneID" id="3614936"/>
<dbReference type="KEGG" id="ssp:SSP1094"/>
<dbReference type="PATRIC" id="fig|342451.11.peg.1093"/>
<dbReference type="eggNOG" id="COG0181">
    <property type="taxonomic scope" value="Bacteria"/>
</dbReference>
<dbReference type="HOGENOM" id="CLU_019704_0_2_9"/>
<dbReference type="OrthoDB" id="9810298at2"/>
<dbReference type="UniPathway" id="UPA00251">
    <property type="reaction ID" value="UER00319"/>
</dbReference>
<dbReference type="Proteomes" id="UP000006371">
    <property type="component" value="Chromosome"/>
</dbReference>
<dbReference type="GO" id="GO:0005737">
    <property type="term" value="C:cytoplasm"/>
    <property type="evidence" value="ECO:0007669"/>
    <property type="project" value="TreeGrafter"/>
</dbReference>
<dbReference type="GO" id="GO:0004418">
    <property type="term" value="F:hydroxymethylbilane synthase activity"/>
    <property type="evidence" value="ECO:0007669"/>
    <property type="project" value="UniProtKB-UniRule"/>
</dbReference>
<dbReference type="GO" id="GO:0006782">
    <property type="term" value="P:protoporphyrinogen IX biosynthetic process"/>
    <property type="evidence" value="ECO:0007669"/>
    <property type="project" value="UniProtKB-UniRule"/>
</dbReference>
<dbReference type="CDD" id="cd13646">
    <property type="entry name" value="PBP2_EcHMBS_like"/>
    <property type="match status" value="1"/>
</dbReference>
<dbReference type="FunFam" id="3.30.160.40:FF:000001">
    <property type="entry name" value="Porphobilinogen deaminase"/>
    <property type="match status" value="1"/>
</dbReference>
<dbReference type="FunFam" id="3.40.190.10:FF:000004">
    <property type="entry name" value="Porphobilinogen deaminase"/>
    <property type="match status" value="1"/>
</dbReference>
<dbReference type="FunFam" id="3.40.190.10:FF:000005">
    <property type="entry name" value="Porphobilinogen deaminase"/>
    <property type="match status" value="1"/>
</dbReference>
<dbReference type="Gene3D" id="3.40.190.10">
    <property type="entry name" value="Periplasmic binding protein-like II"/>
    <property type="match status" value="2"/>
</dbReference>
<dbReference type="Gene3D" id="3.30.160.40">
    <property type="entry name" value="Porphobilinogen deaminase, C-terminal domain"/>
    <property type="match status" value="1"/>
</dbReference>
<dbReference type="HAMAP" id="MF_00260">
    <property type="entry name" value="Porphobil_deam"/>
    <property type="match status" value="1"/>
</dbReference>
<dbReference type="InterPro" id="IPR000860">
    <property type="entry name" value="HemC"/>
</dbReference>
<dbReference type="InterPro" id="IPR022419">
    <property type="entry name" value="Porphobilin_deaminase_cofac_BS"/>
</dbReference>
<dbReference type="InterPro" id="IPR022417">
    <property type="entry name" value="Porphobilin_deaminase_N"/>
</dbReference>
<dbReference type="InterPro" id="IPR022418">
    <property type="entry name" value="Porphobilinogen_deaminase_C"/>
</dbReference>
<dbReference type="InterPro" id="IPR036803">
    <property type="entry name" value="Porphobilinogen_deaminase_C_sf"/>
</dbReference>
<dbReference type="NCBIfam" id="TIGR00212">
    <property type="entry name" value="hemC"/>
    <property type="match status" value="1"/>
</dbReference>
<dbReference type="PANTHER" id="PTHR11557">
    <property type="entry name" value="PORPHOBILINOGEN DEAMINASE"/>
    <property type="match status" value="1"/>
</dbReference>
<dbReference type="PANTHER" id="PTHR11557:SF0">
    <property type="entry name" value="PORPHOBILINOGEN DEAMINASE"/>
    <property type="match status" value="1"/>
</dbReference>
<dbReference type="Pfam" id="PF01379">
    <property type="entry name" value="Porphobil_deam"/>
    <property type="match status" value="1"/>
</dbReference>
<dbReference type="Pfam" id="PF03900">
    <property type="entry name" value="Porphobil_deamC"/>
    <property type="match status" value="1"/>
</dbReference>
<dbReference type="PIRSF" id="PIRSF001438">
    <property type="entry name" value="4pyrrol_synth_OHMeBilane_synth"/>
    <property type="match status" value="1"/>
</dbReference>
<dbReference type="PRINTS" id="PR00151">
    <property type="entry name" value="PORPHBDMNASE"/>
</dbReference>
<dbReference type="SUPFAM" id="SSF53850">
    <property type="entry name" value="Periplasmic binding protein-like II"/>
    <property type="match status" value="1"/>
</dbReference>
<dbReference type="SUPFAM" id="SSF54782">
    <property type="entry name" value="Porphobilinogen deaminase (hydroxymethylbilane synthase), C-terminal domain"/>
    <property type="match status" value="1"/>
</dbReference>
<dbReference type="PROSITE" id="PS00533">
    <property type="entry name" value="PORPHOBILINOGEN_DEAM"/>
    <property type="match status" value="1"/>
</dbReference>
<accession>Q49YA2</accession>
<feature type="chain" id="PRO_0000304279" description="Porphobilinogen deaminase">
    <location>
        <begin position="1"/>
        <end position="308"/>
    </location>
</feature>
<feature type="modified residue" description="S-(dipyrrolylmethanemethyl)cysteine" evidence="1">
    <location>
        <position position="241"/>
    </location>
</feature>
<reference key="1">
    <citation type="journal article" date="2005" name="Proc. Natl. Acad. Sci. U.S.A.">
        <title>Whole genome sequence of Staphylococcus saprophyticus reveals the pathogenesis of uncomplicated urinary tract infection.</title>
        <authorList>
            <person name="Kuroda M."/>
            <person name="Yamashita A."/>
            <person name="Hirakawa H."/>
            <person name="Kumano M."/>
            <person name="Morikawa K."/>
            <person name="Higashide M."/>
            <person name="Maruyama A."/>
            <person name="Inose Y."/>
            <person name="Matoba K."/>
            <person name="Toh H."/>
            <person name="Kuhara S."/>
            <person name="Hattori M."/>
            <person name="Ohta T."/>
        </authorList>
    </citation>
    <scope>NUCLEOTIDE SEQUENCE [LARGE SCALE GENOMIC DNA]</scope>
    <source>
        <strain>ATCC 15305 / DSM 20229 / NCIMB 8711 / NCTC 7292 / S-41</strain>
    </source>
</reference>
<name>HEM3_STAS1</name>
<evidence type="ECO:0000255" key="1">
    <source>
        <dbReference type="HAMAP-Rule" id="MF_00260"/>
    </source>
</evidence>
<protein>
    <recommendedName>
        <fullName evidence="1">Porphobilinogen deaminase</fullName>
        <shortName evidence="1">PBG</shortName>
        <ecNumber evidence="1">2.5.1.61</ecNumber>
    </recommendedName>
    <alternativeName>
        <fullName evidence="1">Hydroxymethylbilane synthase</fullName>
        <shortName evidence="1">HMBS</shortName>
    </alternativeName>
    <alternativeName>
        <fullName evidence="1">Pre-uroporphyrinogen synthase</fullName>
    </alternativeName>
</protein>
<comment type="function">
    <text evidence="1">Tetrapolymerization of the monopyrrole PBG into the hydroxymethylbilane pre-uroporphyrinogen in several discrete steps.</text>
</comment>
<comment type="catalytic activity">
    <reaction evidence="1">
        <text>4 porphobilinogen + H2O = hydroxymethylbilane + 4 NH4(+)</text>
        <dbReference type="Rhea" id="RHEA:13185"/>
        <dbReference type="ChEBI" id="CHEBI:15377"/>
        <dbReference type="ChEBI" id="CHEBI:28938"/>
        <dbReference type="ChEBI" id="CHEBI:57845"/>
        <dbReference type="ChEBI" id="CHEBI:58126"/>
        <dbReference type="EC" id="2.5.1.61"/>
    </reaction>
</comment>
<comment type="cofactor">
    <cofactor evidence="1">
        <name>dipyrromethane</name>
        <dbReference type="ChEBI" id="CHEBI:60342"/>
    </cofactor>
    <text evidence="1">Binds 1 dipyrromethane group covalently.</text>
</comment>
<comment type="pathway">
    <text evidence="1">Porphyrin-containing compound metabolism; protoporphyrin-IX biosynthesis; coproporphyrinogen-III from 5-aminolevulinate: step 2/4.</text>
</comment>
<comment type="subunit">
    <text evidence="1">Monomer.</text>
</comment>
<comment type="miscellaneous">
    <text evidence="1">The porphobilinogen subunits are added to the dipyrromethane group.</text>
</comment>
<comment type="similarity">
    <text evidence="1">Belongs to the HMBS family.</text>
</comment>
<keyword id="KW-0627">Porphyrin biosynthesis</keyword>
<keyword id="KW-1185">Reference proteome</keyword>
<keyword id="KW-0808">Transferase</keyword>